<feature type="peptide" id="PRO_0000371749" description="FMRFamide-3">
    <location>
        <begin position="1"/>
        <end position="11"/>
    </location>
</feature>
<feature type="modified residue" description="Phenylalanine amide" evidence="2">
    <location>
        <position position="11"/>
    </location>
</feature>
<reference evidence="4" key="1">
    <citation type="journal article" date="2009" name="Gen. Comp. Endocrinol.">
        <title>Extended FMRFamides in dipteran insects: conservative expression in the neuroendocrine system is accompanied by rapid sequence evolution.</title>
        <authorList>
            <person name="Rahman M.M."/>
            <person name="Fromm B."/>
            <person name="Neupert S."/>
            <person name="Kreusch S."/>
            <person name="Predel R."/>
        </authorList>
    </citation>
    <scope>PROTEIN SEQUENCE</scope>
    <scope>TISSUE SPECIFICITY</scope>
    <scope>MASS SPECTROMETRY</scope>
    <scope>AMIDATION AT PHE-11</scope>
    <source>
        <strain evidence="2">Bangladesh</strain>
        <strain evidence="2">Goondiwindi</strain>
        <tissue evidence="2">Dorsal ganglionic sheath</tissue>
    </source>
</reference>
<comment type="subcellular location">
    <subcellularLocation>
        <location evidence="4">Secreted</location>
    </subcellularLocation>
</comment>
<comment type="tissue specificity">
    <text evidence="2">Detected in the thoracic perisympathetic organs in larvae, and the dorsal ganglionic sheath in adults (at protein level).</text>
</comment>
<comment type="mass spectrometry"/>
<comment type="similarity">
    <text evidence="1">Belongs to the FARP (FMRFamide related peptide) family.</text>
</comment>
<protein>
    <recommendedName>
        <fullName>FMRFamide-3</fullName>
    </recommendedName>
    <alternativeName>
        <fullName evidence="3">LucFMRFamide-3</fullName>
    </alternativeName>
</protein>
<organism>
    <name type="scientific">Lucilia cuprina</name>
    <name type="common">Green bottle fly</name>
    <name type="synonym">Australian sheep blowfly</name>
    <dbReference type="NCBI Taxonomy" id="7375"/>
    <lineage>
        <taxon>Eukaryota</taxon>
        <taxon>Metazoa</taxon>
        <taxon>Ecdysozoa</taxon>
        <taxon>Arthropoda</taxon>
        <taxon>Hexapoda</taxon>
        <taxon>Insecta</taxon>
        <taxon>Pterygota</taxon>
        <taxon>Neoptera</taxon>
        <taxon>Endopterygota</taxon>
        <taxon>Diptera</taxon>
        <taxon>Brachycera</taxon>
        <taxon>Muscomorpha</taxon>
        <taxon>Oestroidea</taxon>
        <taxon>Calliphoridae</taxon>
        <taxon>Luciliinae</taxon>
        <taxon>Lucilia</taxon>
    </lineage>
</organism>
<accession>P85450</accession>
<keyword id="KW-0027">Amidation</keyword>
<keyword id="KW-0903">Direct protein sequencing</keyword>
<keyword id="KW-0527">Neuropeptide</keyword>
<keyword id="KW-0964">Secreted</keyword>
<name>FAR3_LUCCU</name>
<proteinExistence type="evidence at protein level"/>
<sequence>SANTKNDFMRF</sequence>
<evidence type="ECO:0000255" key="1"/>
<evidence type="ECO:0000269" key="2">
    <source>
    </source>
</evidence>
<evidence type="ECO:0000303" key="3">
    <source>
    </source>
</evidence>
<evidence type="ECO:0000305" key="4"/>
<dbReference type="GO" id="GO:0005576">
    <property type="term" value="C:extracellular region"/>
    <property type="evidence" value="ECO:0007669"/>
    <property type="project" value="UniProtKB-SubCell"/>
</dbReference>
<dbReference type="GO" id="GO:0007218">
    <property type="term" value="P:neuropeptide signaling pathway"/>
    <property type="evidence" value="ECO:0007669"/>
    <property type="project" value="UniProtKB-KW"/>
</dbReference>